<name>CUTI1_FUSVN</name>
<dbReference type="EC" id="3.1.1.74" evidence="3 4 7 22 23 24"/>
<dbReference type="EMBL" id="K02640">
    <property type="protein sequence ID" value="AAA33334.1"/>
    <property type="molecule type" value="mRNA"/>
</dbReference>
<dbReference type="EMBL" id="M29759">
    <property type="protein sequence ID" value="AAA33335.1"/>
    <property type="molecule type" value="Genomic_DNA"/>
</dbReference>
<dbReference type="PIR" id="A32836">
    <property type="entry name" value="UVFUS"/>
</dbReference>
<dbReference type="PDB" id="1AGY">
    <property type="method" value="X-ray"/>
    <property type="resolution" value="1.15 A"/>
    <property type="chains" value="A=31-230"/>
</dbReference>
<dbReference type="PDB" id="1CEX">
    <property type="method" value="X-ray"/>
    <property type="resolution" value="1.00 A"/>
    <property type="chains" value="A=17-230"/>
</dbReference>
<dbReference type="PDB" id="1CUA">
    <property type="method" value="X-ray"/>
    <property type="resolution" value="1.80 A"/>
    <property type="chains" value="A=17-230"/>
</dbReference>
<dbReference type="PDB" id="1CUB">
    <property type="method" value="X-ray"/>
    <property type="resolution" value="1.75 A"/>
    <property type="chains" value="A=17-230"/>
</dbReference>
<dbReference type="PDB" id="1CUC">
    <property type="method" value="X-ray"/>
    <property type="resolution" value="1.75 A"/>
    <property type="chains" value="A=17-230"/>
</dbReference>
<dbReference type="PDB" id="1CUD">
    <property type="method" value="X-ray"/>
    <property type="resolution" value="2.70 A"/>
    <property type="chains" value="A/B/C=17-230"/>
</dbReference>
<dbReference type="PDB" id="1CUE">
    <property type="method" value="X-ray"/>
    <property type="resolution" value="2.10 A"/>
    <property type="chains" value="A=33-229"/>
</dbReference>
<dbReference type="PDB" id="1CUF">
    <property type="method" value="X-ray"/>
    <property type="resolution" value="1.75 A"/>
    <property type="chains" value="A=17-230"/>
</dbReference>
<dbReference type="PDB" id="1CUG">
    <property type="method" value="X-ray"/>
    <property type="resolution" value="1.75 A"/>
    <property type="chains" value="A=17-230"/>
</dbReference>
<dbReference type="PDB" id="1CUH">
    <property type="method" value="X-ray"/>
    <property type="resolution" value="1.75 A"/>
    <property type="chains" value="A=17-230"/>
</dbReference>
<dbReference type="PDB" id="1CUI">
    <property type="method" value="X-ray"/>
    <property type="resolution" value="2.50 A"/>
    <property type="chains" value="A=17-230"/>
</dbReference>
<dbReference type="PDB" id="1CUJ">
    <property type="method" value="X-ray"/>
    <property type="resolution" value="1.60 A"/>
    <property type="chains" value="A=17-230"/>
</dbReference>
<dbReference type="PDB" id="1CUS">
    <property type="method" value="X-ray"/>
    <property type="resolution" value="1.25 A"/>
    <property type="chains" value="A=31-230"/>
</dbReference>
<dbReference type="PDB" id="1CUU">
    <property type="method" value="X-ray"/>
    <property type="resolution" value="1.69 A"/>
    <property type="chains" value="A=17-230"/>
</dbReference>
<dbReference type="PDB" id="1CUV">
    <property type="method" value="X-ray"/>
    <property type="resolution" value="2.01 A"/>
    <property type="chains" value="A=17-230"/>
</dbReference>
<dbReference type="PDB" id="1CUW">
    <property type="method" value="X-ray"/>
    <property type="resolution" value="2.70 A"/>
    <property type="chains" value="A/B=17-230"/>
</dbReference>
<dbReference type="PDB" id="1CUX">
    <property type="method" value="X-ray"/>
    <property type="resolution" value="1.75 A"/>
    <property type="chains" value="A=17-230"/>
</dbReference>
<dbReference type="PDB" id="1CUY">
    <property type="method" value="X-ray"/>
    <property type="resolution" value="1.69 A"/>
    <property type="chains" value="A=17-230"/>
</dbReference>
<dbReference type="PDB" id="1CUZ">
    <property type="method" value="X-ray"/>
    <property type="resolution" value="2.10 A"/>
    <property type="chains" value="A=17-230"/>
</dbReference>
<dbReference type="PDB" id="1FFA">
    <property type="method" value="X-ray"/>
    <property type="resolution" value="1.69 A"/>
    <property type="chains" value="A=17-230"/>
</dbReference>
<dbReference type="PDB" id="1FFB">
    <property type="method" value="X-ray"/>
    <property type="resolution" value="1.75 A"/>
    <property type="chains" value="A=17-230"/>
</dbReference>
<dbReference type="PDB" id="1FFC">
    <property type="method" value="X-ray"/>
    <property type="resolution" value="1.75 A"/>
    <property type="chains" value="A=17-230"/>
</dbReference>
<dbReference type="PDB" id="1FFD">
    <property type="method" value="X-ray"/>
    <property type="resolution" value="1.69 A"/>
    <property type="chains" value="A=17-230"/>
</dbReference>
<dbReference type="PDB" id="1FFE">
    <property type="method" value="X-ray"/>
    <property type="resolution" value="1.69 A"/>
    <property type="chains" value="A=17-230"/>
</dbReference>
<dbReference type="PDB" id="1OXM">
    <property type="method" value="X-ray"/>
    <property type="resolution" value="2.30 A"/>
    <property type="chains" value="A/B=17-230"/>
</dbReference>
<dbReference type="PDB" id="1XZA">
    <property type="method" value="X-ray"/>
    <property type="resolution" value="1.80 A"/>
    <property type="chains" value="A=17-230"/>
</dbReference>
<dbReference type="PDB" id="1XZB">
    <property type="method" value="X-ray"/>
    <property type="resolution" value="1.75 A"/>
    <property type="chains" value="A=17-230"/>
</dbReference>
<dbReference type="PDB" id="1XZC">
    <property type="method" value="X-ray"/>
    <property type="resolution" value="1.75 A"/>
    <property type="chains" value="A=17-230"/>
</dbReference>
<dbReference type="PDB" id="1XZD">
    <property type="method" value="X-ray"/>
    <property type="resolution" value="2.70 A"/>
    <property type="chains" value="A=17-228"/>
</dbReference>
<dbReference type="PDB" id="1XZE">
    <property type="method" value="X-ray"/>
    <property type="resolution" value="1.75 A"/>
    <property type="chains" value="A=17-230"/>
</dbReference>
<dbReference type="PDB" id="1XZF">
    <property type="method" value="X-ray"/>
    <property type="resolution" value="1.69 A"/>
    <property type="chains" value="A=17-230"/>
</dbReference>
<dbReference type="PDB" id="1XZG">
    <property type="method" value="X-ray"/>
    <property type="resolution" value="1.69 A"/>
    <property type="chains" value="A=17-230"/>
</dbReference>
<dbReference type="PDB" id="1XZH">
    <property type="method" value="X-ray"/>
    <property type="resolution" value="1.69 A"/>
    <property type="chains" value="A=17-230"/>
</dbReference>
<dbReference type="PDB" id="1XZI">
    <property type="method" value="X-ray"/>
    <property type="resolution" value="1.69 A"/>
    <property type="chains" value="A=17-230"/>
</dbReference>
<dbReference type="PDB" id="1XZJ">
    <property type="method" value="X-ray"/>
    <property type="resolution" value="1.69 A"/>
    <property type="chains" value="A=17-230"/>
</dbReference>
<dbReference type="PDB" id="1XZK">
    <property type="method" value="X-ray"/>
    <property type="resolution" value="2.01 A"/>
    <property type="chains" value="A/B=17-230"/>
</dbReference>
<dbReference type="PDB" id="1XZL">
    <property type="method" value="X-ray"/>
    <property type="resolution" value="1.69 A"/>
    <property type="chains" value="A=17-230"/>
</dbReference>
<dbReference type="PDB" id="1XZM">
    <property type="method" value="X-ray"/>
    <property type="resolution" value="1.75 A"/>
    <property type="chains" value="A=17-230"/>
</dbReference>
<dbReference type="PDB" id="2CUT">
    <property type="method" value="X-ray"/>
    <property type="resolution" value="1.90 A"/>
    <property type="chains" value="A=31-228"/>
</dbReference>
<dbReference type="PDB" id="3EF3">
    <property type="method" value="X-ray"/>
    <property type="resolution" value="1.50 A"/>
    <property type="chains" value="A=17-230"/>
</dbReference>
<dbReference type="PDB" id="3ESA">
    <property type="method" value="X-ray"/>
    <property type="resolution" value="2.00 A"/>
    <property type="chains" value="A/B=17-230"/>
</dbReference>
<dbReference type="PDB" id="3ESB">
    <property type="method" value="X-ray"/>
    <property type="resolution" value="2.30 A"/>
    <property type="chains" value="A=17-230"/>
</dbReference>
<dbReference type="PDB" id="3ESC">
    <property type="method" value="X-ray"/>
    <property type="resolution" value="1.20 A"/>
    <property type="chains" value="A=17-230"/>
</dbReference>
<dbReference type="PDB" id="3ESD">
    <property type="method" value="X-ray"/>
    <property type="resolution" value="1.22 A"/>
    <property type="chains" value="A=17-230"/>
</dbReference>
<dbReference type="PDB" id="3QPA">
    <property type="method" value="X-ray"/>
    <property type="resolution" value="0.85 A"/>
    <property type="chains" value="A=32-228"/>
</dbReference>
<dbReference type="PDB" id="3QPC">
    <property type="method" value="X-ray"/>
    <property type="resolution" value="0.98 A"/>
    <property type="chains" value="A=32-228"/>
</dbReference>
<dbReference type="PDBsum" id="1AGY"/>
<dbReference type="PDBsum" id="1CEX"/>
<dbReference type="PDBsum" id="1CUA"/>
<dbReference type="PDBsum" id="1CUB"/>
<dbReference type="PDBsum" id="1CUC"/>
<dbReference type="PDBsum" id="1CUD"/>
<dbReference type="PDBsum" id="1CUE"/>
<dbReference type="PDBsum" id="1CUF"/>
<dbReference type="PDBsum" id="1CUG"/>
<dbReference type="PDBsum" id="1CUH"/>
<dbReference type="PDBsum" id="1CUI"/>
<dbReference type="PDBsum" id="1CUJ"/>
<dbReference type="PDBsum" id="1CUS"/>
<dbReference type="PDBsum" id="1CUU"/>
<dbReference type="PDBsum" id="1CUV"/>
<dbReference type="PDBsum" id="1CUW"/>
<dbReference type="PDBsum" id="1CUX"/>
<dbReference type="PDBsum" id="1CUY"/>
<dbReference type="PDBsum" id="1CUZ"/>
<dbReference type="PDBsum" id="1FFA"/>
<dbReference type="PDBsum" id="1FFB"/>
<dbReference type="PDBsum" id="1FFC"/>
<dbReference type="PDBsum" id="1FFD"/>
<dbReference type="PDBsum" id="1FFE"/>
<dbReference type="PDBsum" id="1OXM"/>
<dbReference type="PDBsum" id="1XZA"/>
<dbReference type="PDBsum" id="1XZB"/>
<dbReference type="PDBsum" id="1XZC"/>
<dbReference type="PDBsum" id="1XZD"/>
<dbReference type="PDBsum" id="1XZE"/>
<dbReference type="PDBsum" id="1XZF"/>
<dbReference type="PDBsum" id="1XZG"/>
<dbReference type="PDBsum" id="1XZH"/>
<dbReference type="PDBsum" id="1XZI"/>
<dbReference type="PDBsum" id="1XZJ"/>
<dbReference type="PDBsum" id="1XZK"/>
<dbReference type="PDBsum" id="1XZL"/>
<dbReference type="PDBsum" id="1XZM"/>
<dbReference type="PDBsum" id="2CUT"/>
<dbReference type="PDBsum" id="3EF3"/>
<dbReference type="PDBsum" id="3ESA"/>
<dbReference type="PDBsum" id="3ESB"/>
<dbReference type="PDBsum" id="3ESC"/>
<dbReference type="PDBsum" id="3ESD"/>
<dbReference type="PDBsum" id="3QPA"/>
<dbReference type="PDBsum" id="3QPC"/>
<dbReference type="BMRB" id="P00590"/>
<dbReference type="SMR" id="P00590"/>
<dbReference type="ChEMBL" id="CHEMBL2176862"/>
<dbReference type="ESTHER" id="fusso-cutas">
    <property type="family name" value="Cutinase"/>
</dbReference>
<dbReference type="GlyConnect" id="116">
    <property type="glycosylation" value="2 O-Linked glycans"/>
</dbReference>
<dbReference type="GlyCosmos" id="P00590">
    <property type="glycosylation" value="No site information, 4 glycans"/>
</dbReference>
<dbReference type="VEuPathDB" id="FungiDB:NECHADRAFT_81019"/>
<dbReference type="BRENDA" id="3.1.1.74">
    <property type="organism ID" value="8196"/>
</dbReference>
<dbReference type="SABIO-RK" id="P00590"/>
<dbReference type="EvolutionaryTrace" id="P00590"/>
<dbReference type="GO" id="GO:0005576">
    <property type="term" value="C:extracellular region"/>
    <property type="evidence" value="ECO:0007669"/>
    <property type="project" value="UniProtKB-SubCell"/>
</dbReference>
<dbReference type="GO" id="GO:0050525">
    <property type="term" value="F:cutinase activity"/>
    <property type="evidence" value="ECO:0000314"/>
    <property type="project" value="UniProtKB"/>
</dbReference>
<dbReference type="GO" id="GO:0016052">
    <property type="term" value="P:carbohydrate catabolic process"/>
    <property type="evidence" value="ECO:0007669"/>
    <property type="project" value="TreeGrafter"/>
</dbReference>
<dbReference type="FunFam" id="3.40.50.1820:FF:000235">
    <property type="entry name" value="Cutinase 1"/>
    <property type="match status" value="1"/>
</dbReference>
<dbReference type="Gene3D" id="3.40.50.1820">
    <property type="entry name" value="alpha/beta hydrolase"/>
    <property type="match status" value="1"/>
</dbReference>
<dbReference type="InterPro" id="IPR029058">
    <property type="entry name" value="AB_hydrolase_fold"/>
</dbReference>
<dbReference type="InterPro" id="IPR000675">
    <property type="entry name" value="Cutinase/axe"/>
</dbReference>
<dbReference type="InterPro" id="IPR043580">
    <property type="entry name" value="CUTINASE_1"/>
</dbReference>
<dbReference type="InterPro" id="IPR043579">
    <property type="entry name" value="CUTINASE_2"/>
</dbReference>
<dbReference type="InterPro" id="IPR011150">
    <property type="entry name" value="Cutinase_monf"/>
</dbReference>
<dbReference type="PANTHER" id="PTHR48250:SF3">
    <property type="entry name" value="CUTINASE 1-RELATED"/>
    <property type="match status" value="1"/>
</dbReference>
<dbReference type="PANTHER" id="PTHR48250">
    <property type="entry name" value="CUTINASE 2-RELATED"/>
    <property type="match status" value="1"/>
</dbReference>
<dbReference type="Pfam" id="PF01083">
    <property type="entry name" value="Cutinase"/>
    <property type="match status" value="1"/>
</dbReference>
<dbReference type="PRINTS" id="PR00129">
    <property type="entry name" value="CUTINASE"/>
</dbReference>
<dbReference type="SMART" id="SM01110">
    <property type="entry name" value="Cutinase"/>
    <property type="match status" value="1"/>
</dbReference>
<dbReference type="SUPFAM" id="SSF53474">
    <property type="entry name" value="alpha/beta-Hydrolases"/>
    <property type="match status" value="1"/>
</dbReference>
<dbReference type="PROSITE" id="PS00155">
    <property type="entry name" value="CUTINASE_1"/>
    <property type="match status" value="1"/>
</dbReference>
<dbReference type="PROSITE" id="PS00931">
    <property type="entry name" value="CUTINASE_2"/>
    <property type="match status" value="1"/>
</dbReference>
<keyword id="KW-0002">3D-structure</keyword>
<keyword id="KW-0903">Direct protein sequencing</keyword>
<keyword id="KW-1015">Disulfide bond</keyword>
<keyword id="KW-0325">Glycoprotein</keyword>
<keyword id="KW-0378">Hydrolase</keyword>
<keyword id="KW-0964">Secreted</keyword>
<keyword id="KW-0719">Serine esterase</keyword>
<keyword id="KW-0732">Signal</keyword>
<keyword id="KW-0843">Virulence</keyword>
<feature type="signal peptide" evidence="2">
    <location>
        <begin position="1"/>
        <end position="16"/>
    </location>
</feature>
<feature type="propeptide" id="PRO_0000455280" evidence="21">
    <location>
        <begin position="17"/>
        <end position="31"/>
    </location>
</feature>
<feature type="chain" id="PRO_0000006440" description="Cutinase 1">
    <location>
        <begin position="32"/>
        <end position="230"/>
    </location>
</feature>
<feature type="active site" description="Nucleophile" evidence="5 25">
    <location>
        <position position="136"/>
    </location>
</feature>
<feature type="active site" evidence="5 25">
    <location>
        <position position="191"/>
    </location>
</feature>
<feature type="active site" description="Proton donor/acceptor" evidence="5 25">
    <location>
        <position position="204"/>
    </location>
</feature>
<feature type="site" description="Transition state stabilizer" evidence="5 12 13 15 25 48 49 63">
    <location>
        <position position="58"/>
    </location>
</feature>
<feature type="site" description="Transition state stabilizer" evidence="5 12 15 25 49 63">
    <location>
        <position position="137"/>
    </location>
</feature>
<feature type="modified residue" description="N-D-glucuronoyl glycine" evidence="11">
    <location>
        <position position="32"/>
    </location>
</feature>
<feature type="disulfide bond" evidence="5 8 12 13 14 15 16 17 25 26 27 28 29 30 31 32 33 34 35 36 37 38 39 40 41 42 43 44 45 46 47 48 49 50 51 52 53 54 55 56 57 58 59 60 61 62 63 64 65 66 67 68 69 70">
    <location>
        <begin position="47"/>
        <end position="125"/>
    </location>
</feature>
<feature type="disulfide bond" evidence="5 8 12 13 14 15 16 17 25 26 27 28 29 30 31 32 33 34 35 36 37 38 39 40 41 42 43 44 45 46 47 48 49 50 51 52 53 54 55 56 57 58 59 60 61 62 63 64 65 66 67 68 69 70">
    <location>
        <begin position="187"/>
        <end position="194"/>
    </location>
</feature>
<feature type="mutagenesis site" description="Severely decreases activity on p-nitrophenyl butyrate." evidence="13">
    <original>S</original>
    <variation>A</variation>
    <location>
        <position position="58"/>
    </location>
</feature>
<feature type="mutagenesis site" description="Increases activity on p-nitrophenyl butyrate." evidence="6">
    <original>L</original>
    <variation>A</variation>
    <location>
        <position position="97"/>
    </location>
</feature>
<feature type="mutagenesis site" description="Severely decreases activity on p-nitrophenyl butyrate." evidence="6 13">
    <original>N</original>
    <variation>A</variation>
    <variation>L</variation>
    <variation>D</variation>
    <variation>W</variation>
    <location>
        <position position="100"/>
    </location>
</feature>
<feature type="mutagenesis site" description="Increases activity on poly(ethylene terephthalate) (PET) and decreases activity on polyamide 6,6." evidence="6">
    <original>N</original>
    <variation>A</variation>
    <location>
        <position position="100"/>
    </location>
</feature>
<feature type="mutagenesis site" description="Increases activity on p-nitrophenyl butyrate, poly(ethylene terephthalate) (PET) and polyamide 6,6." evidence="6">
    <original>L</original>
    <variation>A</variation>
    <location>
        <position position="198"/>
    </location>
</feature>
<feature type="mutagenesis site" description="Increases activity on p-nitrophenyl butyrate and poly(ethylene terephthalate) (PET)." evidence="6">
    <original>V</original>
    <variation>A</variation>
    <location>
        <position position="200"/>
    </location>
</feature>
<feature type="mutagenesis site" description="Increases activity on p-nitrophenyl butyrate and decreases activity on poly(ethylene terephthalate) (PET)." evidence="6">
    <original>L</original>
    <variation>A</variation>
    <location>
        <position position="205"/>
    </location>
</feature>
<feature type="sequence conflict" description="In Ref. 2; AAA33335." evidence="20" ref="2">
    <original>R</original>
    <variation>A</variation>
    <location>
        <position position="48"/>
    </location>
</feature>
<feature type="sequence conflict" description="In Ref. 2; AAA33335." evidence="20" ref="2">
    <original>R</original>
    <variation>A</variation>
    <location>
        <position position="94"/>
    </location>
</feature>
<feature type="turn" evidence="72">
    <location>
        <begin position="38"/>
        <end position="41"/>
    </location>
</feature>
<feature type="helix" evidence="71">
    <location>
        <begin position="44"/>
        <end position="46"/>
    </location>
</feature>
<feature type="strand" evidence="72">
    <location>
        <begin position="49"/>
        <end position="55"/>
    </location>
</feature>
<feature type="turn" evidence="72">
    <location>
        <begin position="62"/>
        <end position="67"/>
    </location>
</feature>
<feature type="helix" evidence="72">
    <location>
        <begin position="68"/>
        <end position="79"/>
    </location>
</feature>
<feature type="turn" evidence="72">
    <location>
        <begin position="81"/>
        <end position="83"/>
    </location>
</feature>
<feature type="strand" evidence="72">
    <location>
        <begin position="84"/>
        <end position="88"/>
    </location>
</feature>
<feature type="helix" evidence="72">
    <location>
        <begin position="97"/>
        <end position="101"/>
    </location>
</feature>
<feature type="helix" evidence="72">
    <location>
        <begin position="108"/>
        <end position="124"/>
    </location>
</feature>
<feature type="strand" evidence="72">
    <location>
        <begin position="129"/>
        <end position="135"/>
    </location>
</feature>
<feature type="helix" evidence="72">
    <location>
        <begin position="138"/>
        <end position="148"/>
    </location>
</feature>
<feature type="helix" evidence="72">
    <location>
        <begin position="151"/>
        <end position="154"/>
    </location>
</feature>
<feature type="strand" evidence="72">
    <location>
        <begin position="157"/>
        <end position="164"/>
    </location>
</feature>
<feature type="turn" evidence="72">
    <location>
        <begin position="166"/>
        <end position="173"/>
    </location>
</feature>
<feature type="helix" evidence="72">
    <location>
        <begin position="180"/>
        <end position="182"/>
    </location>
</feature>
<feature type="strand" evidence="72">
    <location>
        <begin position="183"/>
        <end position="186"/>
    </location>
</feature>
<feature type="helix" evidence="72">
    <location>
        <begin position="192"/>
        <end position="195"/>
    </location>
</feature>
<feature type="helix" evidence="72">
    <location>
        <begin position="202"/>
        <end position="205"/>
    </location>
</feature>
<feature type="helix" evidence="72">
    <location>
        <begin position="208"/>
        <end position="212"/>
    </location>
</feature>
<feature type="helix" evidence="72">
    <location>
        <begin position="214"/>
        <end position="227"/>
    </location>
</feature>
<sequence length="230" mass="23982">MKFFALTTLLAATASALPTSNPAQELEARQLGRTTRDDLINGNSASCRDVIFIYARGSTETGNLGTLGPSIASNLESAFGKDGVWIQGVGGAYRATLGDNALPRGTSSAAIREMLGLFQQANTKCPDATLIAGGYSQGAALAAASIEDLDSAIRDKIAGTVLFGYTKNLQNRGRIPNYPADRTKVFCNTGDLVCTGSLIVAAPHLAYGPDARGPAPEFLIEKVRAVRGSA</sequence>
<protein>
    <recommendedName>
        <fullName>Cutinase 1</fullName>
        <ecNumber evidence="3 4 7 22 23 24">3.1.1.74</ecNumber>
    </recommendedName>
    <alternativeName>
        <fullName>Cutin hydrolase 1</fullName>
    </alternativeName>
</protein>
<gene>
    <name type="primary">CUT1</name>
    <name type="synonym">CUTA</name>
</gene>
<accession>P00590</accession>
<reference key="1">
    <citation type="journal article" date="1984" name="Proc. Natl. Acad. Sci. U.S.A.">
        <title>Cloning and structure determination of cDNA for cutinase, an enzyme involved in fungal penetration of plants.</title>
        <authorList>
            <person name="Soliday C.L."/>
            <person name="Flurkey W.H."/>
            <person name="Okita T.W."/>
            <person name="Kolattukudy P.E."/>
        </authorList>
    </citation>
    <scope>NUCLEOTIDE SEQUENCE [MRNA]</scope>
    <scope>PROTEIN SEQUENCE OF 57-94; 113-142 AND 183-192</scope>
    <source>
        <strain>T-8</strain>
    </source>
</reference>
<reference key="2">
    <citation type="journal article" date="1989" name="J. Bacteriol.">
        <title>Structure of the cutinase gene and detection of promoter activity in the 5'-flanking region by fungal transformation.</title>
        <authorList>
            <person name="Soliday C.L."/>
            <person name="Dickman M.B."/>
            <person name="Kolattukudy P.E."/>
        </authorList>
    </citation>
    <scope>NUCLEOTIDE SEQUENCE [GENOMIC DNA]</scope>
</reference>
<reference key="3">
    <citation type="journal article" date="1980" name="Eur. J. Biochem.">
        <title>Structural studies on cutinase, a glycoprotein containing novel amino acids and glucuronic acid amide at the N terminus.</title>
        <authorList>
            <person name="Lin T.-S."/>
            <person name="Kolattukudy P.E."/>
        </authorList>
    </citation>
    <scope>GLUCURONIC-ACID BINDING AT GLY-32</scope>
    <scope>GLYCOSYLATION</scope>
</reference>
<reference key="4">
    <citation type="journal article" date="1989" name="Nature">
        <title>Insertion of cutinase gene into a wound pathogen enables it to infect intact host.</title>
        <authorList>
            <person name="Dickman M.B."/>
            <person name="Podila G.K."/>
            <person name="Kolattukudy P.E."/>
        </authorList>
    </citation>
    <scope>FUNCTION</scope>
</reference>
<reference key="5">
    <citation type="journal article" date="2005" name="J. Polym. Sci.">
        <title>Cutinase--A new tool for biomodification of synthetic fibers.</title>
        <authorList>
            <person name="Silva C."/>
            <person name="Carneiro F."/>
            <person name="O'Neill A."/>
            <person name="Fonseca L.P."/>
            <person name="Cabral J.S.M."/>
            <person name="Guebitz G."/>
            <person name="Cavaco-Paulo A."/>
        </authorList>
    </citation>
    <scope>BIOTECHNOLOGY</scope>
</reference>
<reference key="6">
    <citation type="journal article" date="2007" name="J. Biotechnol.">
        <title>Tailoring cutinase activity towards polyethylene terephthalate and polyamide 6,6 fibers.</title>
        <authorList>
            <person name="Araujo R."/>
            <person name="Silva C."/>
            <person name="O'Neill A."/>
            <person name="Micaelo N."/>
            <person name="Guebitz G."/>
            <person name="Soares C.M."/>
            <person name="Casal M."/>
            <person name="Cavaco-Paulo A."/>
        </authorList>
    </citation>
    <scope>BIOTECHNOLOGY</scope>
    <scope>MUTAGENESIS OF LEU-97; ASN-100; LEU-198; VAL-200 AND LEU-205</scope>
</reference>
<reference key="7">
    <citation type="journal article" date="2008" name="J. Biol. Chem.">
        <title>Identification and characterization of bacterial cutinase.</title>
        <authorList>
            <person name="Chen S."/>
            <person name="Tong X."/>
            <person name="Woodard R.W."/>
            <person name="Du G."/>
            <person name="Wu J."/>
            <person name="Chen J."/>
        </authorList>
    </citation>
    <scope>FUNCTION</scope>
    <scope>CATALYTIC ACTIVITY</scope>
    <scope>BIOPHYSICOCHEMICAL PROPERTIES</scope>
    <scope>BIOTECHNOLOGY</scope>
</reference>
<reference key="8">
    <citation type="journal article" date="2009" name="J. Am. Chem. Soc.">
        <title>Structural and functional studies of Aspergillus oryzae cutinase: enhanced thermostability and hydrolytic activity of synthetic ester and polyester degradation.</title>
        <authorList>
            <person name="Liu Z."/>
            <person name="Gosser Y."/>
            <person name="Baker P.J."/>
            <person name="Ravee Y."/>
            <person name="Lu Z."/>
            <person name="Alemu G."/>
            <person name="Li H."/>
            <person name="Butterfoss G.L."/>
            <person name="Kong X.P."/>
            <person name="Gross R."/>
            <person name="Montclare J.K."/>
        </authorList>
    </citation>
    <scope>FUNCTION</scope>
    <scope>CATALYTIC ACTIVITY</scope>
    <scope>BIOPHYSICOCHEMICAL PROPERTIES</scope>
</reference>
<reference key="9">
    <citation type="journal article" date="2014" name="J. Mol. Biol.">
        <title>A Cutinase from Trichoderma reesei with a lid-covered active site and kinetic properties of true lipases.</title>
        <authorList>
            <person name="Roussel A."/>
            <person name="Amara S."/>
            <person name="Nyyssola A."/>
            <person name="Mateos-Diaz E."/>
            <person name="Blangy S."/>
            <person name="Kontkanen H."/>
            <person name="Westerholm-Parvinen A."/>
            <person name="Carriere F."/>
            <person name="Cambillau C."/>
        </authorList>
    </citation>
    <scope>ACTIVITY REGULATION</scope>
    <scope>BIOTECHNOLOGY</scope>
</reference>
<reference evidence="37" key="10">
    <citation type="journal article" date="1992" name="Nature">
        <title>Fusarium solani cutinase is a lipolytic enzyme with a catalytic serine accessible to solvent.</title>
        <authorList>
            <person name="Martinez C."/>
            <person name="de Geus P."/>
            <person name="Lauwereys M."/>
            <person name="Matthyssens G."/>
            <person name="Cambillau C."/>
        </authorList>
    </citation>
    <scope>X-RAY CRYSTALLOGRAPHY (1.25 ANGSTROMS) OF 31-230</scope>
    <scope>ACTIVE SITE</scope>
    <scope>DISULFIDE BONDS</scope>
</reference>
<reference evidence="63" key="11">
    <citation type="journal article" date="1994" name="Biochemistry">
        <title>Cutinase, a lipolytic enzyme with a preformed oxyanion hole.</title>
        <authorList>
            <person name="Martinez C."/>
            <person name="Nicolas A."/>
            <person name="van Tilbeurgh H."/>
            <person name="Egloff M.-P."/>
            <person name="Cudrey C."/>
            <person name="Verger R."/>
            <person name="Cambillau C."/>
        </authorList>
    </citation>
    <scope>X-RAY CRYSTALLOGRAPHY (1.90 ANGSTROMS) OF 31-228 IN COMPLEX WITH INHIBITOR PARAOXON</scope>
    <scope>FUNCTION</scope>
    <scope>CATALYTIC ACTIVITY</scope>
    <scope>DISULFIDE BONDS</scope>
</reference>
<reference evidence="51 52" key="12">
    <citation type="submission" date="1995-11" db="PDB data bank">
        <title>Core Accessibility of Fusarium Solani Pisi Cutinase Explored by Means of Hg Derivatives of the S129C Mutant.</title>
        <authorList>
            <person name="Longhi S."/>
            <person name="Martinez C."/>
            <person name="Nicolas A."/>
            <person name="Cambillau C."/>
        </authorList>
    </citation>
    <scope>X-RAY CRYSTALLOGRAPHY (1.75 ANGSTROMS) OF 17-230</scope>
    <scope>DISULFIDE BONDS</scope>
</reference>
<reference evidence="44 45 46 47 48" key="13">
    <citation type="journal article" date="1996" name="Biochemistry">
        <title>Contribution of cutinase serine 42 side chain to the stabilization of the oxyanion transition state.</title>
        <authorList>
            <person name="Nicolas A."/>
            <person name="Egmond M."/>
            <person name="Verrips C.T."/>
            <person name="de Vlieg J."/>
            <person name="Longhi S."/>
            <person name="Cambillau C."/>
            <person name="Martinez C."/>
        </authorList>
    </citation>
    <scope>X-RAY CRYSTALLOGRAPHY (1.69 ANGSTROMS) OF 17-230</scope>
    <scope>FUNCTION</scope>
    <scope>CATALYTIC ACTIVITY</scope>
    <scope>BIOPHYSICOCHEMICAL PROPERTIES</scope>
    <scope>DISULFIDE BONDS</scope>
    <scope>MUTAGENESIS OF SER-58 AND ASN-100</scope>
</reference>
<reference evidence="27 28 29 30 31 32 33 34 35 36 38" key="14">
    <citation type="journal article" date="1996" name="Proteins">
        <title>Dynamics of Fusarium solani cutinase investigated through structural comparison among different crystal forms of its variants.</title>
        <authorList>
            <person name="Longhi S."/>
            <person name="Nicolas A."/>
            <person name="Creveld L."/>
            <person name="Egmond M."/>
            <person name="Verrips C.T."/>
            <person name="de Vlieg J."/>
            <person name="Martinez C."/>
            <person name="Cambillau C."/>
        </authorList>
    </citation>
    <scope>X-RAY CRYSTALLOGRAPHY (1.60 ANGSTROMS) OF 17-230 OF MUTANT CYS-136</scope>
    <scope>DISULFIDE BONDS</scope>
</reference>
<reference evidence="25 26" key="15">
    <citation type="journal article" date="1997" name="J. Mol. Biol.">
        <title>Atomic resolution (1.0 A) crystal structure of Fusarium solani cutinase: stereochemical analysis.</title>
        <authorList>
            <person name="Longhi S."/>
            <person name="Czjzek M."/>
            <person name="Lamzin V."/>
            <person name="Nicolas A."/>
            <person name="Cambillau C."/>
        </authorList>
    </citation>
    <scope>X-RAY CRYSTALLOGRAPHY (1.00 ANGSTROMS) OF 17-230</scope>
    <scope>ACTIVE SITE</scope>
    <scope>DISULFIDE BONDS</scope>
</reference>
<reference evidence="49" key="16">
    <citation type="journal article" date="1997" name="Protein Sci.">
        <title>Crystal structure of cutinase covalently inhibited by a triglyceride analogue.</title>
        <authorList>
            <person name="Longhi S."/>
            <person name="Mannesse M."/>
            <person name="Verheij H.M."/>
            <person name="De Haas G.H."/>
            <person name="Egmond M."/>
            <person name="Knoops-Mouthuy E."/>
            <person name="Cambillau C."/>
        </authorList>
    </citation>
    <scope>X-RAY CRYSTALLOGRAPHY (2.30 ANGSTROMS) OF 17-230 IN COMPLEX WITH A SUBSTRATE ANALOG</scope>
    <scope>DISULFIDE BONDS</scope>
</reference>
<reference key="17">
    <citation type="journal article" date="1997" name="Protein Sci.">
        <title>1H, 13C, and 15N resonance assignments of Fusarium solani pisi cutinase and preliminary features of the structure in solution.</title>
        <authorList>
            <person name="Prompers J.J."/>
            <person name="Groenewegen A."/>
            <person name="van Schaik R.C."/>
            <person name="Pepermans H.A.M."/>
            <person name="Hilbers C.W."/>
        </authorList>
    </citation>
    <scope>STRUCTURE BY NMR</scope>
</reference>
<reference evidence="64 65 66 67 68" key="18">
    <citation type="journal article" date="2009" name="Chemistry">
        <title>Solid-state structural characterization of cutinase-ECE-pincer-metal hybrids.</title>
        <authorList>
            <person name="Rutten L."/>
            <person name="Wieczorek B."/>
            <person name="Mannie J.P."/>
            <person name="Kruithof C.A."/>
            <person name="Dijkstra H.P."/>
            <person name="Egmond M.R."/>
            <person name="Lutz M."/>
            <person name="Klein Gebbink R.J."/>
            <person name="Gros P."/>
            <person name="van Koten G."/>
        </authorList>
    </citation>
    <scope>X-RAY CRYSTALLOGRAPHY (1.20 ANGSTROMS) OF 17-230</scope>
    <scope>DISULFIDE BONDS</scope>
</reference>
<reference evidence="69 70" key="19">
    <citation type="submission" date="2011-02" db="PDB data bank">
        <title>Structure of Fusarium Solani Cutinase expressed in Pichia pastoris.</title>
        <authorList>
            <person name="Lu A."/>
            <person name="Gosser Y."/>
            <person name="Montclare J.K."/>
            <person name="Liu Z."/>
            <person name="Kong X."/>
        </authorList>
    </citation>
    <scope>X-RAY CRYSTALLOGRAPHY (0.85 ANGSTROMS) OF 32-228</scope>
    <scope>DISULFIDE BONDS</scope>
</reference>
<organism>
    <name type="scientific">Fusarium vanettenii</name>
    <name type="common">Neocosmospora pisi</name>
    <dbReference type="NCBI Taxonomy" id="2747968"/>
    <lineage>
        <taxon>Eukaryota</taxon>
        <taxon>Fungi</taxon>
        <taxon>Dikarya</taxon>
        <taxon>Ascomycota</taxon>
        <taxon>Pezizomycotina</taxon>
        <taxon>Sordariomycetes</taxon>
        <taxon>Hypocreomycetidae</taxon>
        <taxon>Hypocreales</taxon>
        <taxon>Nectriaceae</taxon>
        <taxon>Fusarium</taxon>
        <taxon>Fusarium solani species complex</taxon>
    </lineage>
</organism>
<evidence type="ECO:0000250" key="1">
    <source>
        <dbReference type="UniProtKB" id="P11373"/>
    </source>
</evidence>
<evidence type="ECO:0000255" key="2"/>
<evidence type="ECO:0000255" key="3">
    <source>
        <dbReference type="PROSITE-ProRule" id="PRU10108"/>
    </source>
</evidence>
<evidence type="ECO:0000255" key="4">
    <source>
        <dbReference type="PROSITE-ProRule" id="PRU10109"/>
    </source>
</evidence>
<evidence type="ECO:0000269" key="5">
    <source>
    </source>
</evidence>
<evidence type="ECO:0000269" key="6">
    <source>
    </source>
</evidence>
<evidence type="ECO:0000269" key="7">
    <source>
    </source>
</evidence>
<evidence type="ECO:0000269" key="8">
    <source>
    </source>
</evidence>
<evidence type="ECO:0000269" key="9">
    <source>
    </source>
</evidence>
<evidence type="ECO:0000269" key="10">
    <source>
    </source>
</evidence>
<evidence type="ECO:0000269" key="11">
    <source>
    </source>
</evidence>
<evidence type="ECO:0000269" key="12">
    <source>
    </source>
</evidence>
<evidence type="ECO:0000269" key="13">
    <source>
    </source>
</evidence>
<evidence type="ECO:0000269" key="14">
    <source>
    </source>
</evidence>
<evidence type="ECO:0000269" key="15">
    <source>
    </source>
</evidence>
<evidence type="ECO:0000269" key="16">
    <source>
    </source>
</evidence>
<evidence type="ECO:0000269" key="17">
    <source ref="12"/>
</evidence>
<evidence type="ECO:0000269" key="18">
    <source ref="4"/>
</evidence>
<evidence type="ECO:0000269" key="19">
    <source ref="5"/>
</evidence>
<evidence type="ECO:0000305" key="20"/>
<evidence type="ECO:0000305" key="21">
    <source>
    </source>
</evidence>
<evidence type="ECO:0000305" key="22">
    <source>
    </source>
</evidence>
<evidence type="ECO:0000305" key="23">
    <source>
    </source>
</evidence>
<evidence type="ECO:0000305" key="24">
    <source>
    </source>
</evidence>
<evidence type="ECO:0007744" key="25">
    <source>
        <dbReference type="PDB" id="1AGY"/>
    </source>
</evidence>
<evidence type="ECO:0007744" key="26">
    <source>
        <dbReference type="PDB" id="1CEX"/>
    </source>
</evidence>
<evidence type="ECO:0007744" key="27">
    <source>
        <dbReference type="PDB" id="1CUA"/>
    </source>
</evidence>
<evidence type="ECO:0007744" key="28">
    <source>
        <dbReference type="PDB" id="1CUB"/>
    </source>
</evidence>
<evidence type="ECO:0007744" key="29">
    <source>
        <dbReference type="PDB" id="1CUC"/>
    </source>
</evidence>
<evidence type="ECO:0007744" key="30">
    <source>
        <dbReference type="PDB" id="1CUD"/>
    </source>
</evidence>
<evidence type="ECO:0007744" key="31">
    <source>
        <dbReference type="PDB" id="1CUE"/>
    </source>
</evidence>
<evidence type="ECO:0007744" key="32">
    <source>
        <dbReference type="PDB" id="1CUF"/>
    </source>
</evidence>
<evidence type="ECO:0007744" key="33">
    <source>
        <dbReference type="PDB" id="1CUG"/>
    </source>
</evidence>
<evidence type="ECO:0007744" key="34">
    <source>
        <dbReference type="PDB" id="1CUH"/>
    </source>
</evidence>
<evidence type="ECO:0007744" key="35">
    <source>
        <dbReference type="PDB" id="1CUI"/>
    </source>
</evidence>
<evidence type="ECO:0007744" key="36">
    <source>
        <dbReference type="PDB" id="1CUJ"/>
    </source>
</evidence>
<evidence type="ECO:0007744" key="37">
    <source>
        <dbReference type="PDB" id="1CUS"/>
    </source>
</evidence>
<evidence type="ECO:0007744" key="38">
    <source>
        <dbReference type="PDB" id="1CUU"/>
    </source>
</evidence>
<evidence type="ECO:0007744" key="39">
    <source>
        <dbReference type="PDB" id="1CUV"/>
    </source>
</evidence>
<evidence type="ECO:0007744" key="40">
    <source>
        <dbReference type="PDB" id="1CUW"/>
    </source>
</evidence>
<evidence type="ECO:0007744" key="41">
    <source>
        <dbReference type="PDB" id="1CUX"/>
    </source>
</evidence>
<evidence type="ECO:0007744" key="42">
    <source>
        <dbReference type="PDB" id="1CUY"/>
    </source>
</evidence>
<evidence type="ECO:0007744" key="43">
    <source>
        <dbReference type="PDB" id="1CUZ"/>
    </source>
</evidence>
<evidence type="ECO:0007744" key="44">
    <source>
        <dbReference type="PDB" id="1FFA"/>
    </source>
</evidence>
<evidence type="ECO:0007744" key="45">
    <source>
        <dbReference type="PDB" id="1FFB"/>
    </source>
</evidence>
<evidence type="ECO:0007744" key="46">
    <source>
        <dbReference type="PDB" id="1FFC"/>
    </source>
</evidence>
<evidence type="ECO:0007744" key="47">
    <source>
        <dbReference type="PDB" id="1FFD"/>
    </source>
</evidence>
<evidence type="ECO:0007744" key="48">
    <source>
        <dbReference type="PDB" id="1FFE"/>
    </source>
</evidence>
<evidence type="ECO:0007744" key="49">
    <source>
        <dbReference type="PDB" id="1OXM"/>
    </source>
</evidence>
<evidence type="ECO:0007744" key="50">
    <source>
        <dbReference type="PDB" id="1XZA"/>
    </source>
</evidence>
<evidence type="ECO:0007744" key="51">
    <source>
        <dbReference type="PDB" id="1XZB"/>
    </source>
</evidence>
<evidence type="ECO:0007744" key="52">
    <source>
        <dbReference type="PDB" id="1XZC"/>
    </source>
</evidence>
<evidence type="ECO:0007744" key="53">
    <source>
        <dbReference type="PDB" id="1XZD"/>
    </source>
</evidence>
<evidence type="ECO:0007744" key="54">
    <source>
        <dbReference type="PDB" id="1XZE"/>
    </source>
</evidence>
<evidence type="ECO:0007744" key="55">
    <source>
        <dbReference type="PDB" id="1XZF"/>
    </source>
</evidence>
<evidence type="ECO:0007744" key="56">
    <source>
        <dbReference type="PDB" id="1XZG"/>
    </source>
</evidence>
<evidence type="ECO:0007744" key="57">
    <source>
        <dbReference type="PDB" id="1XZH"/>
    </source>
</evidence>
<evidence type="ECO:0007744" key="58">
    <source>
        <dbReference type="PDB" id="1XZI"/>
    </source>
</evidence>
<evidence type="ECO:0007744" key="59">
    <source>
        <dbReference type="PDB" id="1XZJ"/>
    </source>
</evidence>
<evidence type="ECO:0007744" key="60">
    <source>
        <dbReference type="PDB" id="1XZK"/>
    </source>
</evidence>
<evidence type="ECO:0007744" key="61">
    <source>
        <dbReference type="PDB" id="1XZL"/>
    </source>
</evidence>
<evidence type="ECO:0007744" key="62">
    <source>
        <dbReference type="PDB" id="1XZM"/>
    </source>
</evidence>
<evidence type="ECO:0007744" key="63">
    <source>
        <dbReference type="PDB" id="2CUT"/>
    </source>
</evidence>
<evidence type="ECO:0007744" key="64">
    <source>
        <dbReference type="PDB" id="3EF3"/>
    </source>
</evidence>
<evidence type="ECO:0007744" key="65">
    <source>
        <dbReference type="PDB" id="3ESA"/>
    </source>
</evidence>
<evidence type="ECO:0007744" key="66">
    <source>
        <dbReference type="PDB" id="3ESB"/>
    </source>
</evidence>
<evidence type="ECO:0007744" key="67">
    <source>
        <dbReference type="PDB" id="3ESC"/>
    </source>
</evidence>
<evidence type="ECO:0007744" key="68">
    <source>
        <dbReference type="PDB" id="3ESD"/>
    </source>
</evidence>
<evidence type="ECO:0007744" key="69">
    <source>
        <dbReference type="PDB" id="3QPA"/>
    </source>
</evidence>
<evidence type="ECO:0007744" key="70">
    <source>
        <dbReference type="PDB" id="3QPC"/>
    </source>
</evidence>
<evidence type="ECO:0007829" key="71">
    <source>
        <dbReference type="PDB" id="1CEX"/>
    </source>
</evidence>
<evidence type="ECO:0007829" key="72">
    <source>
        <dbReference type="PDB" id="3QPA"/>
    </source>
</evidence>
<comment type="function">
    <text evidence="7 9 12 13 18">Catalyzes the hydrolysis of complex carboxylic polyesters found in the cell wall of plants (PubMed:18658138, PubMed:19810726, PubMed:8286366, PubMed:8555209). Degrades cutin, a macromolecule that forms the structure of the plant cuticle (PubMed:18658138, PubMed:19810726, PubMed:8286366, PubMed:8555209). Allows pathogenic fungi to penetrate through the cuticular barrier into the host plant during the initial stage of fungal infection (Ref.4).</text>
</comment>
<comment type="catalytic activity">
    <reaction evidence="3 4 7 22 23 24">
        <text>cutin + H2O = cutin monomers.</text>
        <dbReference type="EC" id="3.1.1.74"/>
    </reaction>
</comment>
<comment type="activity regulation">
    <text evidence="10 12">Inhibited by n-undecyl phosphonate (C11Y4) (PubMed:25219509). Inhibited by paraoxon (PubMed:25219509, PubMed:8286366).</text>
</comment>
<comment type="biophysicochemical properties">
    <kinetics>
        <KM evidence="9">0.67 uM for p-nitrophenyl acetate (at pH 7.5)</KM>
        <KM evidence="9">1.26 uM for p-nitrophenyl butyrate (at pH 7.5)</KM>
        <KM evidence="13">0.68 mM for p-nitrophenyl butyrate (at pH 9 and 30 degrees Celsius)</KM>
        <KM evidence="9">1.48 uM for p-nitrophenyl valerate (at pH 7.5)</KM>
        <KM evidence="9">1.5 uM for p-nitrophenyl hexanoate (at pH 7.5)</KM>
        <text evidence="13">kcat is 1800 sec(-1) with p-nitrophenyl butyrate as substrate (at pH 9 and 30 degrees Celsius).</text>
    </kinetics>
    <phDependence>
        <text evidence="7">Optimum pH is 8.</text>
    </phDependence>
    <temperatureDependence>
        <text evidence="7 9">Optimum temperature is below 30 degrees Celsius (PubMed:19810726). Optimum temperature is 30-40 degrees Celsius (PubMed:18658138).</text>
    </temperatureDependence>
</comment>
<comment type="subcellular location">
    <subcellularLocation>
        <location evidence="1">Secreted</location>
    </subcellularLocation>
</comment>
<comment type="PTM">
    <text evidence="1">The 2 disulfide bonds play a critical role in holding the catalytic residues in juxta-position; reduction of the disulfide bridges results in the complete inactivation of the enzyme.</text>
</comment>
<comment type="PTM">
    <text evidence="11">O-glycosylated; contains one mole each of mannose, arabinose, N-acetylglucosamine, and glucuronic acid.</text>
</comment>
<comment type="biotechnology">
    <text evidence="6 7 10 19">May have promising applications in chemical and textile industries as it is capable of hydrolyzing a variety of substrates including soluble esters and insoluble triglycerides (PubMed:18658138, PubMed:25219509). Can hydrolyze and thus modulate the surface properties of synthetic fibers such as the plastic poly(ethylene terephthalate) (PET), or the textile fibers polyamide 6,6, polyester and acrylic (PubMed:17306400, Ref.5).</text>
</comment>
<comment type="similarity">
    <text evidence="20">Belongs to the cutinase family.</text>
</comment>
<proteinExistence type="evidence at protein level"/>